<organism>
    <name type="scientific">Arabidopsis thaliana</name>
    <name type="common">Mouse-ear cress</name>
    <dbReference type="NCBI Taxonomy" id="3702"/>
    <lineage>
        <taxon>Eukaryota</taxon>
        <taxon>Viridiplantae</taxon>
        <taxon>Streptophyta</taxon>
        <taxon>Embryophyta</taxon>
        <taxon>Tracheophyta</taxon>
        <taxon>Spermatophyta</taxon>
        <taxon>Magnoliopsida</taxon>
        <taxon>eudicotyledons</taxon>
        <taxon>Gunneridae</taxon>
        <taxon>Pentapetalae</taxon>
        <taxon>rosids</taxon>
        <taxon>malvids</taxon>
        <taxon>Brassicales</taxon>
        <taxon>Brassicaceae</taxon>
        <taxon>Camelineae</taxon>
        <taxon>Arabidopsis</taxon>
    </lineage>
</organism>
<gene>
    <name type="ordered locus">At3g20650</name>
    <name type="ORF">F3H11.3</name>
</gene>
<evidence type="ECO:0000250" key="1"/>
<evidence type="ECO:0000255" key="2">
    <source>
        <dbReference type="PROSITE-ProRule" id="PRU00895"/>
    </source>
</evidence>
<evidence type="ECO:0000256" key="3">
    <source>
        <dbReference type="SAM" id="MobiDB-lite"/>
    </source>
</evidence>
<name>MCES1_ARATH</name>
<comment type="function">
    <text evidence="1">mRNA-capping methyltransferase that methylates the N7 position of the added guanosine to the 5'-cap structure of mRNAs. Binds RNA containing 5'-terminal GpppC (By similarity).</text>
</comment>
<comment type="catalytic activity">
    <reaction evidence="2">
        <text>a 5'-end (5'-triphosphoguanosine)-ribonucleoside in mRNA + S-adenosyl-L-methionine = a 5'-end (N(7)-methyl 5'-triphosphoguanosine)-ribonucleoside in mRNA + S-adenosyl-L-homocysteine</text>
        <dbReference type="Rhea" id="RHEA:67008"/>
        <dbReference type="Rhea" id="RHEA-COMP:17166"/>
        <dbReference type="Rhea" id="RHEA-COMP:17167"/>
        <dbReference type="ChEBI" id="CHEBI:57856"/>
        <dbReference type="ChEBI" id="CHEBI:59789"/>
        <dbReference type="ChEBI" id="CHEBI:156461"/>
        <dbReference type="ChEBI" id="CHEBI:167617"/>
        <dbReference type="EC" id="2.1.1.56"/>
    </reaction>
</comment>
<comment type="subcellular location">
    <subcellularLocation>
        <location evidence="1">Nucleus</location>
    </subcellularLocation>
</comment>
<comment type="alternative products">
    <event type="alternative splicing"/>
    <isoform>
        <id>Q9LHQ7-1</id>
        <name>1</name>
        <sequence type="displayed"/>
    </isoform>
    <text>A number of isoforms are produced. According to EST sequences.</text>
</comment>
<comment type="similarity">
    <text evidence="2">Belongs to the class I-like SAM-binding methyltransferase superfamily. mRNA cap 0 methyltransferase family.</text>
</comment>
<protein>
    <recommendedName>
        <fullName>mRNA cap guanine-N(7) methyltransferase 1</fullName>
        <ecNumber>2.1.1.56</ecNumber>
    </recommendedName>
    <alternativeName>
        <fullName>mRNA (guanine-N(7))-methyltransferase 1</fullName>
    </alternativeName>
    <alternativeName>
        <fullName>mRNA cap methyltransferase 1</fullName>
    </alternativeName>
</protein>
<accession>Q9LHQ7</accession>
<accession>Q3EB33</accession>
<proteinExistence type="evidence at transcript level"/>
<keyword id="KW-0025">Alternative splicing</keyword>
<keyword id="KW-0489">Methyltransferase</keyword>
<keyword id="KW-0506">mRNA capping</keyword>
<keyword id="KW-0507">mRNA processing</keyword>
<keyword id="KW-0539">Nucleus</keyword>
<keyword id="KW-1185">Reference proteome</keyword>
<keyword id="KW-0694">RNA-binding</keyword>
<keyword id="KW-0949">S-adenosyl-L-methionine</keyword>
<keyword id="KW-0808">Transferase</keyword>
<sequence>MKRGFSDSPSSSAPPPSSRFKSNPEGDSQFLEDETTKNFARKVADHYSRRTNQTLEEREASPIIHLKKLNNWIKSVLIQLYARPDDAVLDLACGKGGDLIKWDKARIGYYVGIDIAEGSIEDCRTRYNGDADHHQRRKKFSFPSRLLCGDCFEVELDKILEEDAPFDICSCQFAMHYSWTTEARARRALANVSALLRPGGVFIGTMPDANVIIKKLREAEGLEIGNSVYWIRFGEEYSQKKFKSSSPFGIEYVFHLEDAVDCPEWIVPFNVFKSLAEEYDLELVFVKNSHEFVHEYMKKPEFVELMRRLGALGDGSNDQSTLSADEWEAAYLYLSFVLRKRGESDGARRSGRRKNGKMNLSKDDVLYIDS</sequence>
<feature type="chain" id="PRO_0000248331" description="mRNA cap guanine-N(7) methyltransferase 1">
    <location>
        <begin position="1"/>
        <end position="370"/>
    </location>
</feature>
<feature type="domain" description="mRNA cap 0 methyltransferase" evidence="2">
    <location>
        <begin position="61"/>
        <end position="341"/>
    </location>
</feature>
<feature type="region of interest" description="Disordered" evidence="3">
    <location>
        <begin position="1"/>
        <end position="34"/>
    </location>
</feature>
<feature type="compositionally biased region" description="Low complexity" evidence="3">
    <location>
        <begin position="1"/>
        <end position="11"/>
    </location>
</feature>
<feature type="binding site" evidence="2">
    <location>
        <begin position="70"/>
        <end position="71"/>
    </location>
    <ligand>
        <name>mRNA</name>
        <dbReference type="ChEBI" id="CHEBI:33699"/>
    </ligand>
    <ligandPart>
        <name>mRNA cap</name>
    </ligandPart>
</feature>
<feature type="binding site" evidence="2">
    <location>
        <position position="74"/>
    </location>
    <ligand>
        <name>S-adenosyl-L-methionine</name>
        <dbReference type="ChEBI" id="CHEBI:59789"/>
    </ligand>
</feature>
<feature type="binding site" evidence="2">
    <location>
        <position position="92"/>
    </location>
    <ligand>
        <name>S-adenosyl-L-methionine</name>
        <dbReference type="ChEBI" id="CHEBI:59789"/>
    </ligand>
</feature>
<feature type="binding site" evidence="2">
    <location>
        <position position="114"/>
    </location>
    <ligand>
        <name>S-adenosyl-L-methionine</name>
        <dbReference type="ChEBI" id="CHEBI:59789"/>
    </ligand>
</feature>
<feature type="binding site" evidence="2">
    <location>
        <begin position="150"/>
        <end position="151"/>
    </location>
    <ligand>
        <name>S-adenosyl-L-methionine</name>
        <dbReference type="ChEBI" id="CHEBI:59789"/>
    </ligand>
</feature>
<feature type="binding site" evidence="2">
    <location>
        <begin position="172"/>
        <end position="174"/>
    </location>
    <ligand>
        <name>S-adenosyl-L-methionine</name>
        <dbReference type="ChEBI" id="CHEBI:59789"/>
    </ligand>
</feature>
<feature type="site" description="mRNA cap binding" evidence="2">
    <location>
        <position position="95"/>
    </location>
</feature>
<feature type="site" description="mRNA cap binding" evidence="2">
    <location>
        <position position="101"/>
    </location>
</feature>
<feature type="site" description="mRNA cap binding" evidence="2">
    <location>
        <position position="126"/>
    </location>
</feature>
<feature type="site" description="mRNA cap binding" evidence="2">
    <location>
        <position position="176"/>
    </location>
</feature>
<feature type="site" description="mRNA cap binding" evidence="2">
    <location>
        <position position="264"/>
    </location>
</feature>
<feature type="site" description="mRNA cap binding" evidence="2">
    <location>
        <position position="333"/>
    </location>
</feature>
<reference key="1">
    <citation type="journal article" date="2000" name="DNA Res.">
        <title>Structural analysis of Arabidopsis thaliana chromosome 3. II. Sequence features of the 4,251,695 bp regions covered by 90 P1, TAC and BAC clones.</title>
        <authorList>
            <person name="Kaneko T."/>
            <person name="Katoh T."/>
            <person name="Sato S."/>
            <person name="Nakamura Y."/>
            <person name="Asamizu E."/>
            <person name="Tabata S."/>
        </authorList>
    </citation>
    <scope>NUCLEOTIDE SEQUENCE [LARGE SCALE GENOMIC DNA]</scope>
    <source>
        <strain>cv. Columbia</strain>
    </source>
</reference>
<reference key="2">
    <citation type="journal article" date="2017" name="Plant J.">
        <title>Araport11: a complete reannotation of the Arabidopsis thaliana reference genome.</title>
        <authorList>
            <person name="Cheng C.Y."/>
            <person name="Krishnakumar V."/>
            <person name="Chan A.P."/>
            <person name="Thibaud-Nissen F."/>
            <person name="Schobel S."/>
            <person name="Town C.D."/>
        </authorList>
    </citation>
    <scope>GENOME REANNOTATION</scope>
    <source>
        <strain>cv. Columbia</strain>
    </source>
</reference>
<reference key="3">
    <citation type="journal article" date="2003" name="Science">
        <title>Empirical analysis of transcriptional activity in the Arabidopsis genome.</title>
        <authorList>
            <person name="Yamada K."/>
            <person name="Lim J."/>
            <person name="Dale J.M."/>
            <person name="Chen H."/>
            <person name="Shinn P."/>
            <person name="Palm C.J."/>
            <person name="Southwick A.M."/>
            <person name="Wu H.C."/>
            <person name="Kim C.J."/>
            <person name="Nguyen M."/>
            <person name="Pham P.K."/>
            <person name="Cheuk R.F."/>
            <person name="Karlin-Newmann G."/>
            <person name="Liu S.X."/>
            <person name="Lam B."/>
            <person name="Sakano H."/>
            <person name="Wu T."/>
            <person name="Yu G."/>
            <person name="Miranda M."/>
            <person name="Quach H.L."/>
            <person name="Tripp M."/>
            <person name="Chang C.H."/>
            <person name="Lee J.M."/>
            <person name="Toriumi M.J."/>
            <person name="Chan M.M."/>
            <person name="Tang C.C."/>
            <person name="Onodera C.S."/>
            <person name="Deng J.M."/>
            <person name="Akiyama K."/>
            <person name="Ansari Y."/>
            <person name="Arakawa T."/>
            <person name="Banh J."/>
            <person name="Banno F."/>
            <person name="Bowser L."/>
            <person name="Brooks S.Y."/>
            <person name="Carninci P."/>
            <person name="Chao Q."/>
            <person name="Choy N."/>
            <person name="Enju A."/>
            <person name="Goldsmith A.D."/>
            <person name="Gurjal M."/>
            <person name="Hansen N.F."/>
            <person name="Hayashizaki Y."/>
            <person name="Johnson-Hopson C."/>
            <person name="Hsuan V.W."/>
            <person name="Iida K."/>
            <person name="Karnes M."/>
            <person name="Khan S."/>
            <person name="Koesema E."/>
            <person name="Ishida J."/>
            <person name="Jiang P.X."/>
            <person name="Jones T."/>
            <person name="Kawai J."/>
            <person name="Kamiya A."/>
            <person name="Meyers C."/>
            <person name="Nakajima M."/>
            <person name="Narusaka M."/>
            <person name="Seki M."/>
            <person name="Sakurai T."/>
            <person name="Satou M."/>
            <person name="Tamse R."/>
            <person name="Vaysberg M."/>
            <person name="Wallender E.K."/>
            <person name="Wong C."/>
            <person name="Yamamura Y."/>
            <person name="Yuan S."/>
            <person name="Shinozaki K."/>
            <person name="Davis R.W."/>
            <person name="Theologis A."/>
            <person name="Ecker J.R."/>
        </authorList>
    </citation>
    <scope>NUCLEOTIDE SEQUENCE [LARGE SCALE MRNA]</scope>
    <source>
        <strain>cv. Columbia</strain>
    </source>
</reference>
<reference key="4">
    <citation type="submission" date="2006-07" db="EMBL/GenBank/DDBJ databases">
        <title>Large-scale analysis of RIKEN Arabidopsis full-length (RAFL) cDNAs.</title>
        <authorList>
            <person name="Totoki Y."/>
            <person name="Seki M."/>
            <person name="Ishida J."/>
            <person name="Nakajima M."/>
            <person name="Enju A."/>
            <person name="Kamiya A."/>
            <person name="Narusaka M."/>
            <person name="Shin-i T."/>
            <person name="Nakagawa M."/>
            <person name="Sakamoto N."/>
            <person name="Oishi K."/>
            <person name="Kohara Y."/>
            <person name="Kobayashi M."/>
            <person name="Toyoda A."/>
            <person name="Sakaki Y."/>
            <person name="Sakurai T."/>
            <person name="Iida K."/>
            <person name="Akiyama K."/>
            <person name="Satou M."/>
            <person name="Toyoda T."/>
            <person name="Konagaya A."/>
            <person name="Carninci P."/>
            <person name="Kawai J."/>
            <person name="Hayashizaki Y."/>
            <person name="Shinozaki K."/>
        </authorList>
    </citation>
    <scope>NUCLEOTIDE SEQUENCE [LARGE SCALE MRNA]</scope>
    <source>
        <strain>cv. Columbia</strain>
    </source>
</reference>
<dbReference type="EC" id="2.1.1.56"/>
<dbReference type="EMBL" id="AP002034">
    <property type="protein sequence ID" value="BAB02241.1"/>
    <property type="molecule type" value="Genomic_DNA"/>
</dbReference>
<dbReference type="EMBL" id="CP002686">
    <property type="protein sequence ID" value="AEE76407.1"/>
    <property type="molecule type" value="Genomic_DNA"/>
</dbReference>
<dbReference type="EMBL" id="BT005804">
    <property type="protein sequence ID" value="AAO64206.1"/>
    <property type="molecule type" value="mRNA"/>
</dbReference>
<dbReference type="EMBL" id="BT006067">
    <property type="protein sequence ID" value="AAP04052.1"/>
    <property type="molecule type" value="mRNA"/>
</dbReference>
<dbReference type="EMBL" id="AK228381">
    <property type="protein sequence ID" value="BAF00319.1"/>
    <property type="molecule type" value="mRNA"/>
</dbReference>
<dbReference type="RefSeq" id="NP_188701.2">
    <molecule id="Q9LHQ7-1"/>
    <property type="nucleotide sequence ID" value="NM_112956.6"/>
</dbReference>
<dbReference type="SMR" id="Q9LHQ7"/>
<dbReference type="BioGRID" id="6944">
    <property type="interactions" value="4"/>
</dbReference>
<dbReference type="FunCoup" id="Q9LHQ7">
    <property type="interactions" value="4772"/>
</dbReference>
<dbReference type="STRING" id="3702.Q9LHQ7"/>
<dbReference type="iPTMnet" id="Q9LHQ7"/>
<dbReference type="PaxDb" id="3702-AT3G20650.1"/>
<dbReference type="ProteomicsDB" id="238364">
    <molecule id="Q9LHQ7-1"/>
</dbReference>
<dbReference type="EnsemblPlants" id="AT3G20650.1">
    <molecule id="Q9LHQ7-1"/>
    <property type="protein sequence ID" value="AT3G20650.1"/>
    <property type="gene ID" value="AT3G20650"/>
</dbReference>
<dbReference type="GeneID" id="821612"/>
<dbReference type="Gramene" id="AT3G20650.1">
    <molecule id="Q9LHQ7-1"/>
    <property type="protein sequence ID" value="AT3G20650.1"/>
    <property type="gene ID" value="AT3G20650"/>
</dbReference>
<dbReference type="KEGG" id="ath:AT3G20650"/>
<dbReference type="Araport" id="AT3G20650"/>
<dbReference type="TAIR" id="AT3G20650"/>
<dbReference type="eggNOG" id="KOG1975">
    <property type="taxonomic scope" value="Eukaryota"/>
</dbReference>
<dbReference type="HOGENOM" id="CLU_020346_1_0_1"/>
<dbReference type="InParanoid" id="Q9LHQ7"/>
<dbReference type="OrthoDB" id="10248867at2759"/>
<dbReference type="PhylomeDB" id="Q9LHQ7"/>
<dbReference type="PRO" id="PR:Q9LHQ7"/>
<dbReference type="Proteomes" id="UP000006548">
    <property type="component" value="Chromosome 3"/>
</dbReference>
<dbReference type="ExpressionAtlas" id="Q9LHQ7">
    <property type="expression patterns" value="baseline and differential"/>
</dbReference>
<dbReference type="GO" id="GO:0005634">
    <property type="term" value="C:nucleus"/>
    <property type="evidence" value="ECO:0007669"/>
    <property type="project" value="UniProtKB-SubCell"/>
</dbReference>
<dbReference type="GO" id="GO:0004482">
    <property type="term" value="F:mRNA 5'-cap (guanine-N7-)-methyltransferase activity"/>
    <property type="evidence" value="ECO:0007669"/>
    <property type="project" value="UniProtKB-EC"/>
</dbReference>
<dbReference type="GO" id="GO:0003723">
    <property type="term" value="F:RNA binding"/>
    <property type="evidence" value="ECO:0007669"/>
    <property type="project" value="UniProtKB-KW"/>
</dbReference>
<dbReference type="CDD" id="cd02440">
    <property type="entry name" value="AdoMet_MTases"/>
    <property type="match status" value="1"/>
</dbReference>
<dbReference type="FunFam" id="3.40.50.150:FF:000127">
    <property type="entry name" value="mRNA cap guanine-N7 methyltransferase"/>
    <property type="match status" value="1"/>
</dbReference>
<dbReference type="Gene3D" id="3.40.50.150">
    <property type="entry name" value="Vaccinia Virus protein VP39"/>
    <property type="match status" value="1"/>
</dbReference>
<dbReference type="InterPro" id="IPR004971">
    <property type="entry name" value="mRNA_G-N7_MeTrfase_dom"/>
</dbReference>
<dbReference type="InterPro" id="IPR016899">
    <property type="entry name" value="mRNA_G-N7_MeTrfase_euk"/>
</dbReference>
<dbReference type="InterPro" id="IPR039753">
    <property type="entry name" value="RG7MT1"/>
</dbReference>
<dbReference type="InterPro" id="IPR029063">
    <property type="entry name" value="SAM-dependent_MTases_sf"/>
</dbReference>
<dbReference type="PANTHER" id="PTHR12189:SF2">
    <property type="entry name" value="MRNA CAP GUANINE-N7 METHYLTRANSFERASE"/>
    <property type="match status" value="1"/>
</dbReference>
<dbReference type="PANTHER" id="PTHR12189">
    <property type="entry name" value="MRNA GUANINE-7- METHYLTRANSFERASE"/>
    <property type="match status" value="1"/>
</dbReference>
<dbReference type="Pfam" id="PF03291">
    <property type="entry name" value="mRNA_G-N7_MeTrfase"/>
    <property type="match status" value="1"/>
</dbReference>
<dbReference type="PIRSF" id="PIRSF028762">
    <property type="entry name" value="ABD1"/>
    <property type="match status" value="1"/>
</dbReference>
<dbReference type="SUPFAM" id="SSF53335">
    <property type="entry name" value="S-adenosyl-L-methionine-dependent methyltransferases"/>
    <property type="match status" value="1"/>
</dbReference>
<dbReference type="PROSITE" id="PS51562">
    <property type="entry name" value="RNA_CAP0_MT"/>
    <property type="match status" value="1"/>
</dbReference>